<gene>
    <name evidence="1" type="primary">guaA</name>
    <name type="ordered locus">BAMEG_0314</name>
</gene>
<keyword id="KW-0067">ATP-binding</keyword>
<keyword id="KW-0315">Glutamine amidotransferase</keyword>
<keyword id="KW-0332">GMP biosynthesis</keyword>
<keyword id="KW-0436">Ligase</keyword>
<keyword id="KW-0547">Nucleotide-binding</keyword>
<keyword id="KW-0658">Purine biosynthesis</keyword>
<feature type="chain" id="PRO_1000133350" description="GMP synthase [glutamine-hydrolyzing]">
    <location>
        <begin position="1"/>
        <end position="515"/>
    </location>
</feature>
<feature type="domain" description="Glutamine amidotransferase type-1" evidence="1">
    <location>
        <begin position="10"/>
        <end position="200"/>
    </location>
</feature>
<feature type="domain" description="GMPS ATP-PPase" evidence="1">
    <location>
        <begin position="201"/>
        <end position="390"/>
    </location>
</feature>
<feature type="active site" description="Nucleophile" evidence="1">
    <location>
        <position position="87"/>
    </location>
</feature>
<feature type="active site" evidence="1">
    <location>
        <position position="174"/>
    </location>
</feature>
<feature type="active site" evidence="1">
    <location>
        <position position="176"/>
    </location>
</feature>
<feature type="binding site" evidence="1">
    <location>
        <begin position="228"/>
        <end position="234"/>
    </location>
    <ligand>
        <name>ATP</name>
        <dbReference type="ChEBI" id="CHEBI:30616"/>
    </ligand>
</feature>
<proteinExistence type="inferred from homology"/>
<name>GUAA_BACAC</name>
<organism>
    <name type="scientific">Bacillus anthracis (strain CDC 684 / NRRL 3495)</name>
    <dbReference type="NCBI Taxonomy" id="568206"/>
    <lineage>
        <taxon>Bacteria</taxon>
        <taxon>Bacillati</taxon>
        <taxon>Bacillota</taxon>
        <taxon>Bacilli</taxon>
        <taxon>Bacillales</taxon>
        <taxon>Bacillaceae</taxon>
        <taxon>Bacillus</taxon>
        <taxon>Bacillus cereus group</taxon>
    </lineage>
</organism>
<reference key="1">
    <citation type="submission" date="2008-10" db="EMBL/GenBank/DDBJ databases">
        <title>Genome sequence of Bacillus anthracis str. CDC 684.</title>
        <authorList>
            <person name="Dodson R.J."/>
            <person name="Munk A.C."/>
            <person name="Brettin T."/>
            <person name="Bruce D."/>
            <person name="Detter C."/>
            <person name="Tapia R."/>
            <person name="Han C."/>
            <person name="Sutton G."/>
            <person name="Sims D."/>
        </authorList>
    </citation>
    <scope>NUCLEOTIDE SEQUENCE [LARGE SCALE GENOMIC DNA]</scope>
    <source>
        <strain>CDC 684 / NRRL 3495</strain>
    </source>
</reference>
<protein>
    <recommendedName>
        <fullName evidence="1">GMP synthase [glutamine-hydrolyzing]</fullName>
        <ecNumber evidence="1">6.3.5.2</ecNumber>
    </recommendedName>
    <alternativeName>
        <fullName evidence="1">GMP synthetase</fullName>
    </alternativeName>
    <alternativeName>
        <fullName evidence="1">Glutamine amidotransferase</fullName>
    </alternativeName>
</protein>
<evidence type="ECO:0000255" key="1">
    <source>
        <dbReference type="HAMAP-Rule" id="MF_00344"/>
    </source>
</evidence>
<comment type="function">
    <text evidence="1">Catalyzes the synthesis of GMP from XMP.</text>
</comment>
<comment type="catalytic activity">
    <reaction evidence="1">
        <text>XMP + L-glutamine + ATP + H2O = GMP + L-glutamate + AMP + diphosphate + 2 H(+)</text>
        <dbReference type="Rhea" id="RHEA:11680"/>
        <dbReference type="ChEBI" id="CHEBI:15377"/>
        <dbReference type="ChEBI" id="CHEBI:15378"/>
        <dbReference type="ChEBI" id="CHEBI:29985"/>
        <dbReference type="ChEBI" id="CHEBI:30616"/>
        <dbReference type="ChEBI" id="CHEBI:33019"/>
        <dbReference type="ChEBI" id="CHEBI:57464"/>
        <dbReference type="ChEBI" id="CHEBI:58115"/>
        <dbReference type="ChEBI" id="CHEBI:58359"/>
        <dbReference type="ChEBI" id="CHEBI:456215"/>
        <dbReference type="EC" id="6.3.5.2"/>
    </reaction>
</comment>
<comment type="pathway">
    <text evidence="1">Purine metabolism; GMP biosynthesis; GMP from XMP (L-Gln route): step 1/1.</text>
</comment>
<comment type="subunit">
    <text evidence="1">Homodimer.</text>
</comment>
<accession>C3L508</accession>
<dbReference type="EC" id="6.3.5.2" evidence="1"/>
<dbReference type="EMBL" id="CP001215">
    <property type="protein sequence ID" value="ACP15759.1"/>
    <property type="molecule type" value="Genomic_DNA"/>
</dbReference>
<dbReference type="SMR" id="C3L508"/>
<dbReference type="KEGG" id="bah:BAMEG_0314"/>
<dbReference type="HOGENOM" id="CLU_014340_0_5_9"/>
<dbReference type="UniPathway" id="UPA00189">
    <property type="reaction ID" value="UER00296"/>
</dbReference>
<dbReference type="GO" id="GO:0005829">
    <property type="term" value="C:cytosol"/>
    <property type="evidence" value="ECO:0007669"/>
    <property type="project" value="TreeGrafter"/>
</dbReference>
<dbReference type="GO" id="GO:0005524">
    <property type="term" value="F:ATP binding"/>
    <property type="evidence" value="ECO:0007669"/>
    <property type="project" value="UniProtKB-UniRule"/>
</dbReference>
<dbReference type="GO" id="GO:0003921">
    <property type="term" value="F:GMP synthase activity"/>
    <property type="evidence" value="ECO:0007669"/>
    <property type="project" value="InterPro"/>
</dbReference>
<dbReference type="CDD" id="cd01742">
    <property type="entry name" value="GATase1_GMP_Synthase"/>
    <property type="match status" value="1"/>
</dbReference>
<dbReference type="CDD" id="cd01997">
    <property type="entry name" value="GMP_synthase_C"/>
    <property type="match status" value="1"/>
</dbReference>
<dbReference type="FunFam" id="3.30.300.10:FF:000002">
    <property type="entry name" value="GMP synthase [glutamine-hydrolyzing]"/>
    <property type="match status" value="1"/>
</dbReference>
<dbReference type="FunFam" id="3.40.50.620:FF:000001">
    <property type="entry name" value="GMP synthase [glutamine-hydrolyzing]"/>
    <property type="match status" value="1"/>
</dbReference>
<dbReference type="FunFam" id="3.40.50.880:FF:000001">
    <property type="entry name" value="GMP synthase [glutamine-hydrolyzing]"/>
    <property type="match status" value="1"/>
</dbReference>
<dbReference type="Gene3D" id="3.30.300.10">
    <property type="match status" value="1"/>
</dbReference>
<dbReference type="Gene3D" id="3.40.50.880">
    <property type="match status" value="1"/>
</dbReference>
<dbReference type="Gene3D" id="3.40.50.620">
    <property type="entry name" value="HUPs"/>
    <property type="match status" value="1"/>
</dbReference>
<dbReference type="HAMAP" id="MF_00344">
    <property type="entry name" value="GMP_synthase"/>
    <property type="match status" value="1"/>
</dbReference>
<dbReference type="InterPro" id="IPR029062">
    <property type="entry name" value="Class_I_gatase-like"/>
</dbReference>
<dbReference type="InterPro" id="IPR017926">
    <property type="entry name" value="GATASE"/>
</dbReference>
<dbReference type="InterPro" id="IPR001674">
    <property type="entry name" value="GMP_synth_C"/>
</dbReference>
<dbReference type="InterPro" id="IPR004739">
    <property type="entry name" value="GMP_synth_GATase"/>
</dbReference>
<dbReference type="InterPro" id="IPR022955">
    <property type="entry name" value="GMP_synthase"/>
</dbReference>
<dbReference type="InterPro" id="IPR025777">
    <property type="entry name" value="GMPS_ATP_PPase_dom"/>
</dbReference>
<dbReference type="InterPro" id="IPR022310">
    <property type="entry name" value="NAD/GMP_synthase"/>
</dbReference>
<dbReference type="InterPro" id="IPR014729">
    <property type="entry name" value="Rossmann-like_a/b/a_fold"/>
</dbReference>
<dbReference type="NCBIfam" id="TIGR00884">
    <property type="entry name" value="guaA_Cterm"/>
    <property type="match status" value="1"/>
</dbReference>
<dbReference type="NCBIfam" id="TIGR00888">
    <property type="entry name" value="guaA_Nterm"/>
    <property type="match status" value="1"/>
</dbReference>
<dbReference type="NCBIfam" id="NF000848">
    <property type="entry name" value="PRK00074.1"/>
    <property type="match status" value="1"/>
</dbReference>
<dbReference type="PANTHER" id="PTHR11922:SF2">
    <property type="entry name" value="GMP SYNTHASE [GLUTAMINE-HYDROLYZING]"/>
    <property type="match status" value="1"/>
</dbReference>
<dbReference type="PANTHER" id="PTHR11922">
    <property type="entry name" value="GMP SYNTHASE-RELATED"/>
    <property type="match status" value="1"/>
</dbReference>
<dbReference type="Pfam" id="PF00117">
    <property type="entry name" value="GATase"/>
    <property type="match status" value="1"/>
</dbReference>
<dbReference type="Pfam" id="PF00958">
    <property type="entry name" value="GMP_synt_C"/>
    <property type="match status" value="1"/>
</dbReference>
<dbReference type="Pfam" id="PF02540">
    <property type="entry name" value="NAD_synthase"/>
    <property type="match status" value="1"/>
</dbReference>
<dbReference type="PRINTS" id="PR00097">
    <property type="entry name" value="ANTSNTHASEII"/>
</dbReference>
<dbReference type="PRINTS" id="PR00099">
    <property type="entry name" value="CPSGATASE"/>
</dbReference>
<dbReference type="PRINTS" id="PR00096">
    <property type="entry name" value="GATASE"/>
</dbReference>
<dbReference type="SUPFAM" id="SSF52402">
    <property type="entry name" value="Adenine nucleotide alpha hydrolases-like"/>
    <property type="match status" value="1"/>
</dbReference>
<dbReference type="SUPFAM" id="SSF52317">
    <property type="entry name" value="Class I glutamine amidotransferase-like"/>
    <property type="match status" value="1"/>
</dbReference>
<dbReference type="SUPFAM" id="SSF54810">
    <property type="entry name" value="GMP synthetase C-terminal dimerisation domain"/>
    <property type="match status" value="1"/>
</dbReference>
<dbReference type="PROSITE" id="PS51273">
    <property type="entry name" value="GATASE_TYPE_1"/>
    <property type="match status" value="1"/>
</dbReference>
<dbReference type="PROSITE" id="PS51553">
    <property type="entry name" value="GMPS_ATP_PPASE"/>
    <property type="match status" value="1"/>
</dbReference>
<sequence length="515" mass="57579">MIILKKQHDTIIVLDFGSQYNQLIARRIREFGVYSELHPHTITAEEIKAMNPKGIIFSGGPNSVYGEGALHCDEKIFDLGLPIFGICYGMQLMTQQFGGTVERANHREYGKAVLKVENESKLYANLPEEQVVWMSHGDLVTGLPEGFVVDATSESCPIAGMSNEAKNLYGVQFHPEVRHSEHGNDLIKNFVFGVCGCSEGWNMENFIEVELEKIRETVGDKKVLCALSGGVDSSVVAVLIHKAIGDQLTCIFVDHGLLRKGEAEGVMKTFSEGFHMNVIKVDAKERFMNKLKGVEDPEQKRKIIGNEFIYVFDDEASKLEGMDFLAQGTLYTDIVESGTATAQTIKSHHNVGGLPEDMQFKLIEPLNTLFKDEVRVLGSELGIPDEIVWRQPFPGPGLGIRVLGEITEEKLEIVRESDAILREEIIKAGLDREIWQYFTALPGMRSVGVMGDERTYDYTVGIRAVTSIDGMTADWARIPWDVLEKISVRIVNEVKHVNRIVYDVTSKPPATIEWE</sequence>